<accession>C5D4Y5</accession>
<sequence>MGKKPVVIGVAGGSGSGKTSVARAIYEHFGDRSILVLEQDFYYKDQSHLPFEERLRTNYDHPLAFDNDLLIEHIHKLLRYEPIEKPVYDYKLHTRSDKVIHVEPKDVIILEGILVLEDERLRNLMDIKVYVDTDADIRIIRRLLRDINERGRTLESVIEQYVSVVRPMHNQFVEPTKRYADIIIPEGGHNHVAIDLMVTKIRTILEQKSFL</sequence>
<comment type="catalytic activity">
    <reaction evidence="1">
        <text>uridine + ATP = UMP + ADP + H(+)</text>
        <dbReference type="Rhea" id="RHEA:16825"/>
        <dbReference type="ChEBI" id="CHEBI:15378"/>
        <dbReference type="ChEBI" id="CHEBI:16704"/>
        <dbReference type="ChEBI" id="CHEBI:30616"/>
        <dbReference type="ChEBI" id="CHEBI:57865"/>
        <dbReference type="ChEBI" id="CHEBI:456216"/>
        <dbReference type="EC" id="2.7.1.48"/>
    </reaction>
</comment>
<comment type="catalytic activity">
    <reaction evidence="1">
        <text>cytidine + ATP = CMP + ADP + H(+)</text>
        <dbReference type="Rhea" id="RHEA:24674"/>
        <dbReference type="ChEBI" id="CHEBI:15378"/>
        <dbReference type="ChEBI" id="CHEBI:17562"/>
        <dbReference type="ChEBI" id="CHEBI:30616"/>
        <dbReference type="ChEBI" id="CHEBI:60377"/>
        <dbReference type="ChEBI" id="CHEBI:456216"/>
        <dbReference type="EC" id="2.7.1.48"/>
    </reaction>
</comment>
<comment type="pathway">
    <text evidence="1">Pyrimidine metabolism; CTP biosynthesis via salvage pathway; CTP from cytidine: step 1/3.</text>
</comment>
<comment type="pathway">
    <text evidence="1">Pyrimidine metabolism; UMP biosynthesis via salvage pathway; UMP from uridine: step 1/1.</text>
</comment>
<comment type="subcellular location">
    <subcellularLocation>
        <location evidence="1">Cytoplasm</location>
    </subcellularLocation>
</comment>
<comment type="similarity">
    <text evidence="1">Belongs to the uridine kinase family.</text>
</comment>
<feature type="chain" id="PRO_1000211999" description="Uridine kinase">
    <location>
        <begin position="1"/>
        <end position="211"/>
    </location>
</feature>
<feature type="binding site" evidence="1">
    <location>
        <begin position="12"/>
        <end position="19"/>
    </location>
    <ligand>
        <name>ATP</name>
        <dbReference type="ChEBI" id="CHEBI:30616"/>
    </ligand>
</feature>
<organism>
    <name type="scientific">Geobacillus sp. (strain WCH70)</name>
    <dbReference type="NCBI Taxonomy" id="471223"/>
    <lineage>
        <taxon>Bacteria</taxon>
        <taxon>Bacillati</taxon>
        <taxon>Bacillota</taxon>
        <taxon>Bacilli</taxon>
        <taxon>Bacillales</taxon>
        <taxon>Anoxybacillaceae</taxon>
        <taxon>Geobacillus</taxon>
    </lineage>
</organism>
<keyword id="KW-0067">ATP-binding</keyword>
<keyword id="KW-0963">Cytoplasm</keyword>
<keyword id="KW-0418">Kinase</keyword>
<keyword id="KW-0547">Nucleotide-binding</keyword>
<keyword id="KW-0808">Transferase</keyword>
<proteinExistence type="inferred from homology"/>
<evidence type="ECO:0000255" key="1">
    <source>
        <dbReference type="HAMAP-Rule" id="MF_00551"/>
    </source>
</evidence>
<dbReference type="EC" id="2.7.1.48" evidence="1"/>
<dbReference type="EMBL" id="CP001638">
    <property type="protein sequence ID" value="ACS25177.1"/>
    <property type="molecule type" value="Genomic_DNA"/>
</dbReference>
<dbReference type="SMR" id="C5D4Y5"/>
<dbReference type="STRING" id="471223.GWCH70_2482"/>
<dbReference type="KEGG" id="gwc:GWCH70_2482"/>
<dbReference type="eggNOG" id="COG0572">
    <property type="taxonomic scope" value="Bacteria"/>
</dbReference>
<dbReference type="HOGENOM" id="CLU_021278_1_2_9"/>
<dbReference type="OrthoDB" id="9777642at2"/>
<dbReference type="UniPathway" id="UPA00574">
    <property type="reaction ID" value="UER00637"/>
</dbReference>
<dbReference type="UniPathway" id="UPA00579">
    <property type="reaction ID" value="UER00640"/>
</dbReference>
<dbReference type="GO" id="GO:0005737">
    <property type="term" value="C:cytoplasm"/>
    <property type="evidence" value="ECO:0007669"/>
    <property type="project" value="UniProtKB-SubCell"/>
</dbReference>
<dbReference type="GO" id="GO:0005524">
    <property type="term" value="F:ATP binding"/>
    <property type="evidence" value="ECO:0007669"/>
    <property type="project" value="UniProtKB-UniRule"/>
</dbReference>
<dbReference type="GO" id="GO:0043771">
    <property type="term" value="F:cytidine kinase activity"/>
    <property type="evidence" value="ECO:0007669"/>
    <property type="project" value="RHEA"/>
</dbReference>
<dbReference type="GO" id="GO:0004849">
    <property type="term" value="F:uridine kinase activity"/>
    <property type="evidence" value="ECO:0007669"/>
    <property type="project" value="UniProtKB-UniRule"/>
</dbReference>
<dbReference type="GO" id="GO:0044211">
    <property type="term" value="P:CTP salvage"/>
    <property type="evidence" value="ECO:0007669"/>
    <property type="project" value="UniProtKB-UniRule"/>
</dbReference>
<dbReference type="GO" id="GO:0044206">
    <property type="term" value="P:UMP salvage"/>
    <property type="evidence" value="ECO:0007669"/>
    <property type="project" value="UniProtKB-UniRule"/>
</dbReference>
<dbReference type="CDD" id="cd02023">
    <property type="entry name" value="UMPK"/>
    <property type="match status" value="1"/>
</dbReference>
<dbReference type="Gene3D" id="3.40.50.300">
    <property type="entry name" value="P-loop containing nucleotide triphosphate hydrolases"/>
    <property type="match status" value="1"/>
</dbReference>
<dbReference type="HAMAP" id="MF_00551">
    <property type="entry name" value="Uridine_kinase"/>
    <property type="match status" value="1"/>
</dbReference>
<dbReference type="InterPro" id="IPR027417">
    <property type="entry name" value="P-loop_NTPase"/>
</dbReference>
<dbReference type="InterPro" id="IPR006083">
    <property type="entry name" value="PRK/URK"/>
</dbReference>
<dbReference type="InterPro" id="IPR026008">
    <property type="entry name" value="Uridine_kinase"/>
</dbReference>
<dbReference type="InterPro" id="IPR000764">
    <property type="entry name" value="Uridine_kinase-like"/>
</dbReference>
<dbReference type="NCBIfam" id="NF004018">
    <property type="entry name" value="PRK05480.1"/>
    <property type="match status" value="1"/>
</dbReference>
<dbReference type="NCBIfam" id="TIGR00235">
    <property type="entry name" value="udk"/>
    <property type="match status" value="1"/>
</dbReference>
<dbReference type="PANTHER" id="PTHR10285">
    <property type="entry name" value="URIDINE KINASE"/>
    <property type="match status" value="1"/>
</dbReference>
<dbReference type="Pfam" id="PF00485">
    <property type="entry name" value="PRK"/>
    <property type="match status" value="1"/>
</dbReference>
<dbReference type="PRINTS" id="PR00988">
    <property type="entry name" value="URIDINKINASE"/>
</dbReference>
<dbReference type="SUPFAM" id="SSF52540">
    <property type="entry name" value="P-loop containing nucleoside triphosphate hydrolases"/>
    <property type="match status" value="1"/>
</dbReference>
<gene>
    <name evidence="1" type="primary">udk</name>
    <name type="ordered locus">GWCH70_2482</name>
</gene>
<name>URK_GEOSW</name>
<reference key="1">
    <citation type="submission" date="2009-06" db="EMBL/GenBank/DDBJ databases">
        <title>Complete sequence of chromosome of Geopacillus sp. WCH70.</title>
        <authorList>
            <consortium name="US DOE Joint Genome Institute"/>
            <person name="Lucas S."/>
            <person name="Copeland A."/>
            <person name="Lapidus A."/>
            <person name="Glavina del Rio T."/>
            <person name="Dalin E."/>
            <person name="Tice H."/>
            <person name="Bruce D."/>
            <person name="Goodwin L."/>
            <person name="Pitluck S."/>
            <person name="Chertkov O."/>
            <person name="Brettin T."/>
            <person name="Detter J.C."/>
            <person name="Han C."/>
            <person name="Larimer F."/>
            <person name="Land M."/>
            <person name="Hauser L."/>
            <person name="Kyrpides N."/>
            <person name="Mikhailova N."/>
            <person name="Brumm P."/>
            <person name="Mead D.A."/>
            <person name="Richardson P."/>
        </authorList>
    </citation>
    <scope>NUCLEOTIDE SEQUENCE [LARGE SCALE GENOMIC DNA]</scope>
    <source>
        <strain>WCH70</strain>
    </source>
</reference>
<protein>
    <recommendedName>
        <fullName evidence="1">Uridine kinase</fullName>
        <ecNumber evidence="1">2.7.1.48</ecNumber>
    </recommendedName>
    <alternativeName>
        <fullName evidence="1">Cytidine monophosphokinase</fullName>
    </alternativeName>
    <alternativeName>
        <fullName evidence="1">Uridine monophosphokinase</fullName>
    </alternativeName>
</protein>